<proteinExistence type="evidence at protein level"/>
<sequence length="24" mass="2667">GFKQFVHSMGKFGKAFVGEIINPK</sequence>
<comment type="function">
    <text evidence="1">Has antibacterial activity.</text>
</comment>
<comment type="subcellular location">
    <subcellularLocation>
        <location evidence="2">Secreted</location>
    </subcellularLocation>
</comment>
<comment type="tissue specificity">
    <text evidence="5">Expressed by the skin glands.</text>
</comment>
<comment type="mass spectrometry" mass="2666.7" method="MALDI" evidence="2"/>
<comment type="similarity">
    <text evidence="4">Belongs to the gastrin/cholecystokinin family. Magainin subfamily.</text>
</comment>
<evidence type="ECO:0000250" key="1">
    <source>
        <dbReference type="UniProtKB" id="C0HK86"/>
    </source>
</evidence>
<evidence type="ECO:0000269" key="2">
    <source>
    </source>
</evidence>
<evidence type="ECO:0000303" key="3">
    <source>
    </source>
</evidence>
<evidence type="ECO:0000305" key="4"/>
<evidence type="ECO:0000305" key="5">
    <source>
    </source>
</evidence>
<dbReference type="GO" id="GO:0005576">
    <property type="term" value="C:extracellular region"/>
    <property type="evidence" value="ECO:0007669"/>
    <property type="project" value="UniProtKB-SubCell"/>
</dbReference>
<dbReference type="GO" id="GO:0042742">
    <property type="term" value="P:defense response to bacterium"/>
    <property type="evidence" value="ECO:0007669"/>
    <property type="project" value="UniProtKB-KW"/>
</dbReference>
<accession>C0HK85</accession>
<keyword id="KW-0044">Antibiotic</keyword>
<keyword id="KW-0929">Antimicrobial</keyword>
<keyword id="KW-0903">Direct protein sequencing</keyword>
<keyword id="KW-0964">Secreted</keyword>
<organism evidence="3">
    <name type="scientific">Xenopus borealis</name>
    <name type="common">Kenyan clawed frog</name>
    <dbReference type="NCBI Taxonomy" id="8354"/>
    <lineage>
        <taxon>Eukaryota</taxon>
        <taxon>Metazoa</taxon>
        <taxon>Chordata</taxon>
        <taxon>Craniata</taxon>
        <taxon>Vertebrata</taxon>
        <taxon>Euteleostomi</taxon>
        <taxon>Amphibia</taxon>
        <taxon>Batrachia</taxon>
        <taxon>Anura</taxon>
        <taxon>Pipoidea</taxon>
        <taxon>Pipidae</taxon>
        <taxon>Xenopodinae</taxon>
        <taxon>Xenopus</taxon>
        <taxon>Xenopus</taxon>
    </lineage>
</organism>
<feature type="peptide" id="PRO_0000438425" description="Xenoposin-precursor fragment B1" evidence="2">
    <location>
        <begin position="1"/>
        <end position="24"/>
    </location>
</feature>
<protein>
    <recommendedName>
        <fullName evidence="3">Xenoposin-precursor fragment B1</fullName>
        <shortName evidence="3">XPF-B1</shortName>
    </recommendedName>
</protein>
<reference evidence="4" key="1">
    <citation type="journal article" date="2010" name="Comp. Biochem. Physiol.">
        <title>Antimicrobial peptides with therapeutic potential from skin secretions of the Marsabit clawed frog Xenopus borealis (Pipidae).</title>
        <authorList>
            <person name="Mechkarska M."/>
            <person name="Ahmed E."/>
            <person name="Coquet L."/>
            <person name="Leprince J."/>
            <person name="Jouenne T."/>
            <person name="Vaudry H."/>
            <person name="King J.D."/>
            <person name="Conlon J.M."/>
        </authorList>
    </citation>
    <scope>PROTEIN SEQUENCE</scope>
    <scope>SUBCELLULAR LOCATION</scope>
    <scope>MASS SPECTROMETRY</scope>
    <source>
        <tissue evidence="3">Skin secretion</tissue>
    </source>
</reference>
<name>XPFB1_XENBO</name>